<dbReference type="EMBL" id="GU477560">
    <property type="protein sequence ID" value="ADD92029.1"/>
    <property type="molecule type" value="Genomic_DNA"/>
</dbReference>
<dbReference type="EMBL" id="DS571222">
    <property type="protein sequence ID" value="EAL49855.1"/>
    <property type="molecule type" value="Genomic_DNA"/>
</dbReference>
<dbReference type="RefSeq" id="XP_655241.1">
    <property type="nucleotide sequence ID" value="XM_650149.1"/>
</dbReference>
<dbReference type="PDB" id="5HCA">
    <property type="method" value="X-ray"/>
    <property type="resolution" value="2.15 A"/>
    <property type="chains" value="A/B/C=11-201, A/B/C=286-357"/>
</dbReference>
<dbReference type="PDB" id="5HCB">
    <property type="method" value="X-ray"/>
    <property type="resolution" value="2.90 A"/>
    <property type="chains" value="A/B=11-201, A/B=286-357"/>
</dbReference>
<dbReference type="PDBsum" id="5HCA"/>
<dbReference type="PDBsum" id="5HCB"/>
<dbReference type="SMR" id="P83003"/>
<dbReference type="STRING" id="5759.C4M296"/>
<dbReference type="EnsemblProtists" id="GAT95392">
    <property type="protein sequence ID" value="GAT95392"/>
    <property type="gene ID" value="CL6EHI_136160"/>
</dbReference>
<dbReference type="EnsemblProtists" id="rna_EHI_136160-1">
    <property type="protein sequence ID" value="rna_EHI_136160-1"/>
    <property type="gene ID" value="EHI_136160"/>
</dbReference>
<dbReference type="GeneID" id="3409565"/>
<dbReference type="KEGG" id="ehi:EHI_136160"/>
<dbReference type="VEuPathDB" id="AmoebaDB:EHI5A_172890"/>
<dbReference type="VEuPathDB" id="AmoebaDB:EHI8A_196580"/>
<dbReference type="VEuPathDB" id="AmoebaDB:EHI_136160"/>
<dbReference type="VEuPathDB" id="AmoebaDB:KM1_218440"/>
<dbReference type="eggNOG" id="KOG0674">
    <property type="taxonomic scope" value="Eukaryota"/>
</dbReference>
<dbReference type="HOGENOM" id="CLU_018224_0_2_1"/>
<dbReference type="OMA" id="KRDEICA"/>
<dbReference type="OrthoDB" id="1938156at2759"/>
<dbReference type="Proteomes" id="UP000001926">
    <property type="component" value="Partially assembled WGS sequence"/>
</dbReference>
<dbReference type="GO" id="GO:0009986">
    <property type="term" value="C:cell surface"/>
    <property type="evidence" value="ECO:0000314"/>
    <property type="project" value="UniProtKB"/>
</dbReference>
<dbReference type="GO" id="GO:0005829">
    <property type="term" value="C:cytosol"/>
    <property type="evidence" value="ECO:0000250"/>
    <property type="project" value="UniProtKB"/>
</dbReference>
<dbReference type="GO" id="GO:0005783">
    <property type="term" value="C:endoplasmic reticulum"/>
    <property type="evidence" value="ECO:0000314"/>
    <property type="project" value="UniProtKB"/>
</dbReference>
<dbReference type="GO" id="GO:0005788">
    <property type="term" value="C:endoplasmic reticulum lumen"/>
    <property type="evidence" value="ECO:0000250"/>
    <property type="project" value="UniProtKB"/>
</dbReference>
<dbReference type="GO" id="GO:0005789">
    <property type="term" value="C:endoplasmic reticulum membrane"/>
    <property type="evidence" value="ECO:0000318"/>
    <property type="project" value="GO_Central"/>
</dbReference>
<dbReference type="GO" id="GO:0001891">
    <property type="term" value="C:phagocytic cup"/>
    <property type="evidence" value="ECO:0000314"/>
    <property type="project" value="UniProtKB"/>
</dbReference>
<dbReference type="GO" id="GO:0001931">
    <property type="term" value="C:uropod"/>
    <property type="evidence" value="ECO:0000314"/>
    <property type="project" value="UniProtKB"/>
</dbReference>
<dbReference type="GO" id="GO:0005509">
    <property type="term" value="F:calcium ion binding"/>
    <property type="evidence" value="ECO:0000318"/>
    <property type="project" value="GO_Central"/>
</dbReference>
<dbReference type="GO" id="GO:0030246">
    <property type="term" value="F:carbohydrate binding"/>
    <property type="evidence" value="ECO:0007669"/>
    <property type="project" value="UniProtKB-KW"/>
</dbReference>
<dbReference type="GO" id="GO:0001849">
    <property type="term" value="F:complement component C1q complex binding"/>
    <property type="evidence" value="ECO:0000314"/>
    <property type="project" value="UniProtKB"/>
</dbReference>
<dbReference type="GO" id="GO:0046812">
    <property type="term" value="F:host cell surface binding"/>
    <property type="evidence" value="ECO:0000314"/>
    <property type="project" value="UniProtKB"/>
</dbReference>
<dbReference type="GO" id="GO:0051082">
    <property type="term" value="F:unfolded protein binding"/>
    <property type="evidence" value="ECO:0007669"/>
    <property type="project" value="InterPro"/>
</dbReference>
<dbReference type="GO" id="GO:0036503">
    <property type="term" value="P:ERAD pathway"/>
    <property type="evidence" value="ECO:0000318"/>
    <property type="project" value="GO_Central"/>
</dbReference>
<dbReference type="GO" id="GO:0006911">
    <property type="term" value="P:phagocytosis, engulfment"/>
    <property type="evidence" value="ECO:0007669"/>
    <property type="project" value="EnsemblProtists"/>
</dbReference>
<dbReference type="GO" id="GO:0050766">
    <property type="term" value="P:positive regulation of phagocytosis"/>
    <property type="evidence" value="ECO:0000315"/>
    <property type="project" value="UniProtKB"/>
</dbReference>
<dbReference type="GO" id="GO:0006611">
    <property type="term" value="P:protein export from nucleus"/>
    <property type="evidence" value="ECO:0000250"/>
    <property type="project" value="UniProtKB"/>
</dbReference>
<dbReference type="GO" id="GO:0006457">
    <property type="term" value="P:protein folding"/>
    <property type="evidence" value="ECO:0000318"/>
    <property type="project" value="GO_Central"/>
</dbReference>
<dbReference type="GO" id="GO:0042784">
    <property type="term" value="P:symbiont-mediated suppression of host complement activation"/>
    <property type="evidence" value="ECO:0000314"/>
    <property type="project" value="UniProtKB"/>
</dbReference>
<dbReference type="FunFam" id="2.10.250.10:FF:000002">
    <property type="entry name" value="Calreticulin"/>
    <property type="match status" value="1"/>
</dbReference>
<dbReference type="FunFam" id="2.60.120.200:FF:000018">
    <property type="entry name" value="Calreticulin 1b"/>
    <property type="match status" value="1"/>
</dbReference>
<dbReference type="Gene3D" id="2.60.120.200">
    <property type="match status" value="1"/>
</dbReference>
<dbReference type="Gene3D" id="2.10.250.10">
    <property type="entry name" value="Calreticulin/calnexin, P domain"/>
    <property type="match status" value="1"/>
</dbReference>
<dbReference type="InterPro" id="IPR001580">
    <property type="entry name" value="Calret/calnex"/>
</dbReference>
<dbReference type="InterPro" id="IPR018124">
    <property type="entry name" value="Calret/calnex_CS"/>
</dbReference>
<dbReference type="InterPro" id="IPR009169">
    <property type="entry name" value="Calreticulin"/>
</dbReference>
<dbReference type="InterPro" id="IPR009033">
    <property type="entry name" value="Calreticulin/calnexin_P_dom_sf"/>
</dbReference>
<dbReference type="InterPro" id="IPR013320">
    <property type="entry name" value="ConA-like_dom_sf"/>
</dbReference>
<dbReference type="PANTHER" id="PTHR11073:SF2">
    <property type="entry name" value="CALRETICULIN"/>
    <property type="match status" value="1"/>
</dbReference>
<dbReference type="PANTHER" id="PTHR11073">
    <property type="entry name" value="CALRETICULIN AND CALNEXIN"/>
    <property type="match status" value="1"/>
</dbReference>
<dbReference type="Pfam" id="PF00262">
    <property type="entry name" value="Calreticulin"/>
    <property type="match status" value="2"/>
</dbReference>
<dbReference type="PIRSF" id="PIRSF002356">
    <property type="entry name" value="Calreticulin"/>
    <property type="match status" value="1"/>
</dbReference>
<dbReference type="PRINTS" id="PR00626">
    <property type="entry name" value="CALRETICULIN"/>
</dbReference>
<dbReference type="SUPFAM" id="SSF49899">
    <property type="entry name" value="Concanavalin A-like lectins/glucanases"/>
    <property type="match status" value="1"/>
</dbReference>
<dbReference type="SUPFAM" id="SSF63887">
    <property type="entry name" value="P-domain of calnexin/calreticulin"/>
    <property type="match status" value="1"/>
</dbReference>
<dbReference type="PROSITE" id="PS00803">
    <property type="entry name" value="CALRETICULIN_1"/>
    <property type="match status" value="1"/>
</dbReference>
<dbReference type="PROSITE" id="PS00804">
    <property type="entry name" value="CALRETICULIN_2"/>
    <property type="match status" value="1"/>
</dbReference>
<dbReference type="PROSITE" id="PS00014">
    <property type="entry name" value="ER_TARGET"/>
    <property type="match status" value="1"/>
</dbReference>
<accession>P83003</accession>
<accession>A0A175JPK5</accession>
<accession>C4M296</accession>
<accession>F2VN92</accession>
<protein>
    <recommendedName>
        <fullName evidence="11">Calreticulin</fullName>
        <shortName evidence="13">EhCRT</shortName>
    </recommendedName>
</protein>
<proteinExistence type="evidence at protein level"/>
<sequence length="389" mass="45080">MFTLFLLIALSSAKVYFHETFENRDKWIDSTSSGKALGPFKIVSGKWYGDANNKGLQTSEDNKFYIAAAKLDEEFSNKDKNLIVQYNLKFEQGIDCGGGYIKLLPKKSIESEEKFTPESEYNIMFGPDVCGGSKRTHVIMNYKGKNNLIRKEIKCESDDISHLYTLIIRPNNTYVVKIDGVEKQEGKFDEDWDMLAPKEIDDPNVSKPADWVDEKEIDDPNDKKPEGWDDIPKTIVDPNAKKPEEWNDEDDGEWEAPTIENPEYKGEWKPKRIPNPAYKGEWVHPQIANPDYVYDPELYKYDSFAYIGIDVWQVKAGTIYDDILITDDIEEAEKEAKVILERNAAEKKMRDEIKEAEKQKEEEAKKEAEKQKEEETKEEIKKEENKEEL</sequence>
<name>CALR_ENTH1</name>
<feature type="signal peptide" evidence="3">
    <location>
        <begin position="1"/>
        <end position="13"/>
    </location>
</feature>
<feature type="chain" id="PRO_0000208521" description="Calreticulin" evidence="3">
    <location>
        <begin position="14"/>
        <end position="389"/>
    </location>
</feature>
<feature type="repeat" description="1-1" evidence="15">
    <location>
        <begin position="183"/>
        <end position="194"/>
    </location>
</feature>
<feature type="repeat" description="1-2" evidence="15">
    <location>
        <begin position="202"/>
        <end position="213"/>
    </location>
</feature>
<feature type="repeat" description="1-3" evidence="15">
    <location>
        <begin position="219"/>
        <end position="230"/>
    </location>
</feature>
<feature type="repeat" description="1-4" evidence="15">
    <location>
        <begin position="237"/>
        <end position="248"/>
    </location>
</feature>
<feature type="repeat" description="2-1" evidence="15">
    <location>
        <begin position="252"/>
        <end position="262"/>
    </location>
</feature>
<feature type="repeat" description="2-2" evidence="15">
    <location>
        <begin position="266"/>
        <end position="276"/>
    </location>
</feature>
<feature type="repeat" description="2-3" evidence="15">
    <location>
        <begin position="280"/>
        <end position="290"/>
    </location>
</feature>
<feature type="region of interest" description="N-domain" evidence="15">
    <location>
        <begin position="12"/>
        <end position="189"/>
    </location>
</feature>
<feature type="region of interest" description="4 X approximate repeats" evidence="15">
    <location>
        <begin position="183"/>
        <end position="248"/>
    </location>
</feature>
<feature type="region of interest" description="P-domain" evidence="15">
    <location>
        <begin position="190"/>
        <end position="301"/>
    </location>
</feature>
<feature type="region of interest" description="Disordered" evidence="5">
    <location>
        <begin position="213"/>
        <end position="256"/>
    </location>
</feature>
<feature type="region of interest" description="3 X approximate repeats" evidence="15">
    <location>
        <begin position="252"/>
        <end position="290"/>
    </location>
</feature>
<feature type="region of interest" description="C-domain" evidence="15">
    <location>
        <begin position="302"/>
        <end position="389"/>
    </location>
</feature>
<feature type="region of interest" description="Disordered" evidence="5">
    <location>
        <begin position="347"/>
        <end position="389"/>
    </location>
</feature>
<feature type="coiled-coil region" evidence="3">
    <location>
        <begin position="329"/>
        <end position="388"/>
    </location>
</feature>
<feature type="short sequence motif" description="Prevents secretion from ER" evidence="4">
    <location>
        <begin position="386"/>
        <end position="389"/>
    </location>
</feature>
<feature type="compositionally biased region" description="Basic and acidic residues" evidence="5">
    <location>
        <begin position="213"/>
        <end position="232"/>
    </location>
</feature>
<feature type="binding site" evidence="10 18 19">
    <location>
        <position position="20"/>
    </location>
    <ligand>
        <name>Ca(2+)</name>
        <dbReference type="ChEBI" id="CHEBI:29108"/>
    </ligand>
</feature>
<feature type="binding site" evidence="10 18 19">
    <location>
        <position position="52"/>
    </location>
    <ligand>
        <name>Ca(2+)</name>
        <dbReference type="ChEBI" id="CHEBI:29108"/>
    </ligand>
</feature>
<feature type="binding site" evidence="10 18 19">
    <location>
        <position position="53"/>
    </location>
    <ligand>
        <name>Ca(2+)</name>
        <dbReference type="ChEBI" id="CHEBI:29108"/>
    </ligand>
</feature>
<feature type="binding site" evidence="1">
    <location>
        <position position="100"/>
    </location>
    <ligand>
        <name>an alpha-D-glucoside</name>
        <dbReference type="ChEBI" id="CHEBI:22390"/>
    </ligand>
</feature>
<feature type="binding site" evidence="1">
    <location>
        <position position="102"/>
    </location>
    <ligand>
        <name>an alpha-D-glucoside</name>
        <dbReference type="ChEBI" id="CHEBI:22390"/>
    </ligand>
</feature>
<feature type="binding site" evidence="1">
    <location>
        <position position="121"/>
    </location>
    <ligand>
        <name>an alpha-D-glucoside</name>
        <dbReference type="ChEBI" id="CHEBI:22390"/>
    </ligand>
</feature>
<feature type="binding site" evidence="1">
    <location>
        <position position="128"/>
    </location>
    <ligand>
        <name>an alpha-D-glucoside</name>
        <dbReference type="ChEBI" id="CHEBI:22390"/>
    </ligand>
</feature>
<feature type="binding site" evidence="1">
    <location>
        <position position="310"/>
    </location>
    <ligand>
        <name>an alpha-D-glucoside</name>
        <dbReference type="ChEBI" id="CHEBI:22390"/>
    </ligand>
</feature>
<feature type="binding site" evidence="10 18 19">
    <location>
        <position position="321"/>
    </location>
    <ligand>
        <name>Ca(2+)</name>
        <dbReference type="ChEBI" id="CHEBI:29108"/>
    </ligand>
</feature>
<feature type="disulfide bond" evidence="10 18 19">
    <location>
        <begin position="96"/>
        <end position="130"/>
    </location>
</feature>
<feature type="sequence conflict" description="In Ref. 1; ADD92029." evidence="14" ref="1">
    <original>K</original>
    <variation>N</variation>
    <location>
        <position position="358"/>
    </location>
</feature>
<feature type="strand" evidence="20">
    <location>
        <begin position="15"/>
        <end position="19"/>
    </location>
</feature>
<feature type="strand" evidence="21">
    <location>
        <begin position="27"/>
        <end position="29"/>
    </location>
</feature>
<feature type="strand" evidence="20">
    <location>
        <begin position="31"/>
        <end position="33"/>
    </location>
</feature>
<feature type="strand" evidence="20">
    <location>
        <begin position="40"/>
        <end position="43"/>
    </location>
</feature>
<feature type="strand" evidence="20">
    <location>
        <begin position="55"/>
        <end position="58"/>
    </location>
</feature>
<feature type="strand" evidence="20">
    <location>
        <begin position="60"/>
        <end position="75"/>
    </location>
</feature>
<feature type="strand" evidence="20">
    <location>
        <begin position="82"/>
        <end position="90"/>
    </location>
</feature>
<feature type="turn" evidence="21">
    <location>
        <begin position="91"/>
        <end position="93"/>
    </location>
</feature>
<feature type="strand" evidence="20">
    <location>
        <begin position="95"/>
        <end position="98"/>
    </location>
</feature>
<feature type="strand" evidence="20">
    <location>
        <begin position="101"/>
        <end position="104"/>
    </location>
</feature>
<feature type="helix" evidence="20">
    <location>
        <begin position="106"/>
        <end position="108"/>
    </location>
</feature>
<feature type="helix" evidence="20">
    <location>
        <begin position="112"/>
        <end position="114"/>
    </location>
</feature>
<feature type="strand" evidence="20">
    <location>
        <begin position="122"/>
        <end position="130"/>
    </location>
</feature>
<feature type="strand" evidence="20">
    <location>
        <begin position="133"/>
        <end position="143"/>
    </location>
</feature>
<feature type="strand" evidence="20">
    <location>
        <begin position="146"/>
        <end position="149"/>
    </location>
</feature>
<feature type="strand" evidence="20">
    <location>
        <begin position="158"/>
        <end position="160"/>
    </location>
</feature>
<feature type="strand" evidence="20">
    <location>
        <begin position="162"/>
        <end position="169"/>
    </location>
</feature>
<feature type="turn" evidence="20">
    <location>
        <begin position="170"/>
        <end position="172"/>
    </location>
</feature>
<feature type="strand" evidence="20">
    <location>
        <begin position="173"/>
        <end position="178"/>
    </location>
</feature>
<feature type="strand" evidence="20">
    <location>
        <begin position="181"/>
        <end position="189"/>
    </location>
</feature>
<feature type="strand" evidence="20">
    <location>
        <begin position="193"/>
        <end position="195"/>
    </location>
</feature>
<feature type="strand" evidence="21">
    <location>
        <begin position="199"/>
        <end position="201"/>
    </location>
</feature>
<feature type="turn" evidence="20">
    <location>
        <begin position="296"/>
        <end position="299"/>
    </location>
</feature>
<feature type="strand" evidence="20">
    <location>
        <begin position="304"/>
        <end position="315"/>
    </location>
</feature>
<feature type="strand" evidence="20">
    <location>
        <begin position="318"/>
        <end position="327"/>
    </location>
</feature>
<feature type="helix" evidence="20">
    <location>
        <begin position="329"/>
        <end position="356"/>
    </location>
</feature>
<reference evidence="16" key="1">
    <citation type="journal article" date="2011" name="Parasitol. Res.">
        <title>Entamoeba histolytica calreticulin: an endoplasmic reticulum protein expressed by trophozoites into experimentally induced amoebic liver abscesses.</title>
        <authorList>
            <person name="Gonzalez E."/>
            <person name="de Leon Mdel C."/>
            <person name="Meza I."/>
            <person name="Ocadiz-Delgado R."/>
            <person name="Gariglio P."/>
            <person name="Silva-Olivares A."/>
            <person name="Galindo-Gomez S."/>
            <person name="Shibayama M."/>
            <person name="Moran P."/>
            <person name="Valadez A."/>
            <person name="Limon A."/>
            <person name="Rojas L."/>
            <person name="Hernandez E.G."/>
            <person name="Cerritos R."/>
            <person name="Ximenez C."/>
        </authorList>
    </citation>
    <scope>NUCLEOTIDE SEQUENCE [GENOMIC DNA] OF 2-358</scope>
    <scope>SUBCELLULAR LOCATION</scope>
    <scope>DEVELOPMENTAL STAGE</scope>
    <scope>INDUCTION</scope>
    <source>
        <strain evidence="16">ATCC 30459 / HM-1:IMSS / ABRM</strain>
    </source>
</reference>
<reference evidence="17" key="2">
    <citation type="journal article" date="2005" name="Nature">
        <title>The genome of the protist parasite Entamoeba histolytica.</title>
        <authorList>
            <person name="Loftus B.J."/>
            <person name="Anderson I."/>
            <person name="Davies R."/>
            <person name="Alsmark U.C."/>
            <person name="Samuelson J."/>
            <person name="Amedeo P."/>
            <person name="Roncaglia P."/>
            <person name="Berriman M."/>
            <person name="Hirt R.P."/>
            <person name="Mann B.J."/>
            <person name="Nozaki T."/>
            <person name="Suh B."/>
            <person name="Pop M."/>
            <person name="Duchene M."/>
            <person name="Ackers J."/>
            <person name="Tannich E."/>
            <person name="Leippe M."/>
            <person name="Hofer M."/>
            <person name="Bruchhaus I."/>
            <person name="Willhoeft U."/>
            <person name="Bhattacharya A."/>
            <person name="Chillingworth T."/>
            <person name="Churcher C.M."/>
            <person name="Hance Z."/>
            <person name="Harris B."/>
            <person name="Harris D."/>
            <person name="Jagels K."/>
            <person name="Moule S."/>
            <person name="Mungall K.L."/>
            <person name="Ormond D."/>
            <person name="Squares R."/>
            <person name="Whitehead S."/>
            <person name="Quail M.A."/>
            <person name="Rabbinowitsch E."/>
            <person name="Norbertczak H."/>
            <person name="Price C."/>
            <person name="Wang Z."/>
            <person name="Guillen N."/>
            <person name="Gilchrist C."/>
            <person name="Stroup S.E."/>
            <person name="Bhattacharya S."/>
            <person name="Lohia A."/>
            <person name="Foster P.G."/>
            <person name="Sicheritz-Ponten T."/>
            <person name="Weber C."/>
            <person name="Singh U."/>
            <person name="Mukherjee C."/>
            <person name="El-Sayed N.M.A."/>
            <person name="Petri W.A."/>
            <person name="Clark C.G."/>
            <person name="Embley T.M."/>
            <person name="Barrell B.G."/>
            <person name="Fraser C.M."/>
            <person name="Hall N."/>
        </authorList>
    </citation>
    <scope>NUCLEOTIDE SEQUENCE [LARGE SCALE GENOMIC DNA]</scope>
    <source>
        <strain evidence="17">ATCC 30459 / HM-1:IMSS / ABRM</strain>
    </source>
</reference>
<reference key="3">
    <citation type="journal article" date="2002" name="Am. J. Trop. Med. Hyg.">
        <title>Calreticulin-like molecule in trophozoites of Entamoeba histolytica HM1:IMSS (SwissProt: accession P83003).</title>
        <authorList>
            <person name="Gonzalez E."/>
            <person name="Rico G."/>
            <person name="Mendoza G."/>
            <person name="Ramos F."/>
            <person name="Garcia G."/>
            <person name="Moran P."/>
            <person name="Valadez A."/>
            <person name="Melendro E.I."/>
            <person name="Ximenez C."/>
        </authorList>
    </citation>
    <scope>PROTEIN SEQUENCE OF 42-389</scope>
    <source>
        <strain>ATCC 30459 / HM-1:IMSS / ABRM</strain>
    </source>
</reference>
<reference key="4">
    <citation type="journal article" date="2008" name="Mol. Biochem. Parasitol.">
        <title>The endoplasmic reticulum chaperone calreticulin is recruited to the uropod during capping of surface receptors in Entamoeba histolytica.</title>
        <authorList>
            <person name="Girard-Misguich F."/>
            <person name="Sachse M."/>
            <person name="Santi-Rocca J."/>
            <person name="Guillen N."/>
        </authorList>
    </citation>
    <scope>PROTEIN SEQUENCE OF 241-256 AND 301-314</scope>
    <scope>SUBCELLULAR LOCATION</scope>
    <scope>DEVELOPMENTAL STAGE</scope>
</reference>
<reference key="5">
    <citation type="journal article" date="2012" name="Infect. Immun.">
        <title>Entamoeba histolytica cell surface calreticulin binds human c1q and functions in amebic phagocytosis of host cells.</title>
        <authorList>
            <person name="Vaithilingam A."/>
            <person name="Teixeira J.E."/>
            <person name="Miller P.J."/>
            <person name="Heron B.T."/>
            <person name="Huston C.D."/>
        </authorList>
    </citation>
    <scope>FUNCTION</scope>
    <scope>INTERACTION WITH HUMAN C1Q</scope>
    <scope>SUBCELLULAR LOCATION</scope>
    <scope>DEVELOPMENTAL STAGE</scope>
</reference>
<reference key="6">
    <citation type="journal article" date="2014" name="Biomed. Res. Int.">
        <title>Entamoeba histolytica and E. dispar Calreticulin: inhibition of classical complement pathway and differences in the level of expression in amoebic liver abscess.</title>
        <authorList>
            <person name="Ximenez C."/>
            <person name="Gonzalez E."/>
            <person name="Nieves M.E."/>
            <person name="Silva-Olivares A."/>
            <person name="Shibayama M."/>
            <person name="Galindo-Gomez S."/>
            <person name="Escobar-Herrera J."/>
            <person name="Garcia de Leon M.C."/>
            <person name="Moran P."/>
            <person name="Valadez A."/>
            <person name="Rojas L."/>
            <person name="Hernandez E.G."/>
            <person name="Partida O."/>
            <person name="Cerritos R."/>
        </authorList>
    </citation>
    <scope>FUNCTION</scope>
    <scope>INTERACTION WITH HUMAN C1Q</scope>
    <scope>SUBCELLULAR LOCATION</scope>
    <scope>DEVELOPMENTAL STAGE</scope>
    <scope>INDUCTION</scope>
</reference>
<reference evidence="18 19" key="7">
    <citation type="journal article" date="2016" name="IUCrJ">
        <title>Structures of parasite calreticulins provide insights into their flexibility and dual carbohydrate/peptide-binding properties.</title>
        <authorList>
            <person name="Moreau C.P."/>
            <person name="Cioci G."/>
            <person name="Iannello M."/>
            <person name="Laffly E."/>
            <person name="Chouquet A."/>
            <person name="Ferreira A."/>
            <person name="Thielens N.M."/>
            <person name="Gaboriaud C."/>
        </authorList>
    </citation>
    <scope>X-RAY CRYSTALLOGRAPHY (2.15 ANGSTROMS) OF 11-201 AND 286-357 IN COMPLEX WITH CALCIUM AND GLUCOSE</scope>
    <scope>DOMAIN</scope>
    <scope>DISULFIDE BOND</scope>
</reference>
<evidence type="ECO:0000250" key="1">
    <source>
        <dbReference type="UniProtKB" id="P14211"/>
    </source>
</evidence>
<evidence type="ECO:0000250" key="2">
    <source>
        <dbReference type="UniProtKB" id="P27797"/>
    </source>
</evidence>
<evidence type="ECO:0000255" key="3"/>
<evidence type="ECO:0000255" key="4">
    <source>
        <dbReference type="PROSITE-ProRule" id="PRU10138"/>
    </source>
</evidence>
<evidence type="ECO:0000256" key="5">
    <source>
        <dbReference type="SAM" id="MobiDB-lite"/>
    </source>
</evidence>
<evidence type="ECO:0000269" key="6">
    <source>
    </source>
</evidence>
<evidence type="ECO:0000269" key="7">
    <source>
    </source>
</evidence>
<evidence type="ECO:0000269" key="8">
    <source>
    </source>
</evidence>
<evidence type="ECO:0000269" key="9">
    <source>
    </source>
</evidence>
<evidence type="ECO:0000269" key="10">
    <source>
    </source>
</evidence>
<evidence type="ECO:0000303" key="11">
    <source>
    </source>
</evidence>
<evidence type="ECO:0000303" key="12">
    <source>
    </source>
</evidence>
<evidence type="ECO:0000303" key="13">
    <source>
    </source>
</evidence>
<evidence type="ECO:0000305" key="14"/>
<evidence type="ECO:0000305" key="15">
    <source>
    </source>
</evidence>
<evidence type="ECO:0000312" key="16">
    <source>
        <dbReference type="EMBL" id="ADD92029.1"/>
    </source>
</evidence>
<evidence type="ECO:0000312" key="17">
    <source>
        <dbReference type="EMBL" id="EAL49855.1"/>
    </source>
</evidence>
<evidence type="ECO:0007744" key="18">
    <source>
        <dbReference type="PDB" id="5HCA"/>
    </source>
</evidence>
<evidence type="ECO:0007744" key="19">
    <source>
        <dbReference type="PDB" id="5HCB"/>
    </source>
</evidence>
<evidence type="ECO:0007829" key="20">
    <source>
        <dbReference type="PDB" id="5HCA"/>
    </source>
</evidence>
<evidence type="ECO:0007829" key="21">
    <source>
        <dbReference type="PDB" id="5HCB"/>
    </source>
</evidence>
<keyword id="KW-0002">3D-structure</keyword>
<keyword id="KW-0106">Calcium</keyword>
<keyword id="KW-0966">Cell projection</keyword>
<keyword id="KW-0143">Chaperone</keyword>
<keyword id="KW-0175">Coiled coil</keyword>
<keyword id="KW-0903">Direct protein sequencing</keyword>
<keyword id="KW-1015">Disulfide bond</keyword>
<keyword id="KW-0256">Endoplasmic reticulum</keyword>
<keyword id="KW-0430">Lectin</keyword>
<keyword id="KW-0479">Metal-binding</keyword>
<keyword id="KW-1185">Reference proteome</keyword>
<keyword id="KW-0677">Repeat</keyword>
<keyword id="KW-0732">Signal</keyword>
<keyword id="KW-0862">Zinc</keyword>
<organism evidence="17">
    <name type="scientific">Entamoeba histolytica (strain ATCC 30459 / HM-1:IMSS / ABRM)</name>
    <dbReference type="NCBI Taxonomy" id="294381"/>
    <lineage>
        <taxon>Eukaryota</taxon>
        <taxon>Amoebozoa</taxon>
        <taxon>Evosea</taxon>
        <taxon>Archamoebae</taxon>
        <taxon>Mastigamoebida</taxon>
        <taxon>Entamoebidae</taxon>
        <taxon>Entamoeba</taxon>
    </lineage>
</organism>
<gene>
    <name evidence="12" type="primary">CRT</name>
    <name evidence="17" type="ORF">EHI_136160</name>
</gene>
<comment type="function">
    <text evidence="2 8 9">Molecular calcium-binding chaperone promoting folding, oligomeric assembly and quality control in the ER via the calreticulin/calnexin cycle (By similarity). This lectin may interact transiently with almost all of the monoglucosylated glycoproteins that are synthesized in the ER (By similarity). Plays a role in host cell phagocytosis, possibly by acting as a receptor for host C1q (PubMed:22473608). Binding to C1q prevents the activation of the host classical complement pathway (PubMed:24860808). Also, binds to apoptotic host cells independently of host C1q and collectins (PubMed:22473608).</text>
</comment>
<comment type="subunit">
    <text evidence="8 9">Interacts (via C-terminus) with host C1q.</text>
</comment>
<comment type="subcellular location">
    <subcellularLocation>
        <location evidence="6 7 8">Endoplasmic reticulum lumen</location>
    </subcellularLocation>
    <subcellularLocation>
        <location evidence="6">Cell projection</location>
        <location evidence="6">Uropodium</location>
    </subcellularLocation>
    <subcellularLocation>
        <location evidence="8 9">Cell surface</location>
    </subcellularLocation>
    <subcellularLocation>
        <location evidence="8">Cell projection</location>
        <location evidence="8">Phagocytic cup</location>
    </subcellularLocation>
    <text evidence="8">During the early stages of host cell phagocytosis, localizes to the phagocytic cup.</text>
</comment>
<comment type="developmental stage">
    <text evidence="6 7 8 9">Expressed in trophozoites (at protein level).</text>
</comment>
<comment type="induction">
    <text evidence="7 9">Up-regulated during the early stages (30 min-2 hours) of the development of amoebic liver abscess in the host followed by a rapid decrease to basal expression level.</text>
</comment>
<comment type="domain">
    <text evidence="15">Can be divided into a N-terminal globular domain, a proline-rich P-domain forming an elongated arm-like structure and a C-terminal acidic domain. The P-domain binds one molecule of calcium with high affinity, whereas the acidic C-domain binds multiple calcium ions with low affinity.</text>
</comment>
<comment type="domain">
    <text evidence="15">The interaction with glycans occurs through a binding site in the globular lectin domain.</text>
</comment>
<comment type="domain">
    <text evidence="14">The zinc binding sites are localized to the N-domain.</text>
</comment>
<comment type="similarity">
    <text evidence="14">Belongs to the calreticulin family.</text>
</comment>